<dbReference type="EC" id="6.1.1.11" evidence="1"/>
<dbReference type="EMBL" id="CP000250">
    <property type="protein sequence ID" value="ABD07444.1"/>
    <property type="molecule type" value="Genomic_DNA"/>
</dbReference>
<dbReference type="RefSeq" id="WP_011441629.1">
    <property type="nucleotide sequence ID" value="NC_007778.1"/>
</dbReference>
<dbReference type="SMR" id="Q2IWG6"/>
<dbReference type="STRING" id="316058.RPB_2742"/>
<dbReference type="KEGG" id="rpb:RPB_2742"/>
<dbReference type="eggNOG" id="COG0172">
    <property type="taxonomic scope" value="Bacteria"/>
</dbReference>
<dbReference type="HOGENOM" id="CLU_023797_1_1_5"/>
<dbReference type="OrthoDB" id="9804647at2"/>
<dbReference type="UniPathway" id="UPA00906">
    <property type="reaction ID" value="UER00895"/>
</dbReference>
<dbReference type="Proteomes" id="UP000008809">
    <property type="component" value="Chromosome"/>
</dbReference>
<dbReference type="GO" id="GO:0005737">
    <property type="term" value="C:cytoplasm"/>
    <property type="evidence" value="ECO:0007669"/>
    <property type="project" value="UniProtKB-SubCell"/>
</dbReference>
<dbReference type="GO" id="GO:0005524">
    <property type="term" value="F:ATP binding"/>
    <property type="evidence" value="ECO:0007669"/>
    <property type="project" value="UniProtKB-UniRule"/>
</dbReference>
<dbReference type="GO" id="GO:0004828">
    <property type="term" value="F:serine-tRNA ligase activity"/>
    <property type="evidence" value="ECO:0007669"/>
    <property type="project" value="UniProtKB-UniRule"/>
</dbReference>
<dbReference type="GO" id="GO:0016260">
    <property type="term" value="P:selenocysteine biosynthetic process"/>
    <property type="evidence" value="ECO:0007669"/>
    <property type="project" value="UniProtKB-UniRule"/>
</dbReference>
<dbReference type="GO" id="GO:0006434">
    <property type="term" value="P:seryl-tRNA aminoacylation"/>
    <property type="evidence" value="ECO:0007669"/>
    <property type="project" value="UniProtKB-UniRule"/>
</dbReference>
<dbReference type="CDD" id="cd00770">
    <property type="entry name" value="SerRS_core"/>
    <property type="match status" value="1"/>
</dbReference>
<dbReference type="Gene3D" id="3.30.930.10">
    <property type="entry name" value="Bira Bifunctional Protein, Domain 2"/>
    <property type="match status" value="1"/>
</dbReference>
<dbReference type="Gene3D" id="1.10.287.40">
    <property type="entry name" value="Serine-tRNA synthetase, tRNA binding domain"/>
    <property type="match status" value="1"/>
</dbReference>
<dbReference type="HAMAP" id="MF_00176">
    <property type="entry name" value="Ser_tRNA_synth_type1"/>
    <property type="match status" value="1"/>
</dbReference>
<dbReference type="InterPro" id="IPR002314">
    <property type="entry name" value="aa-tRNA-synt_IIb"/>
</dbReference>
<dbReference type="InterPro" id="IPR006195">
    <property type="entry name" value="aa-tRNA-synth_II"/>
</dbReference>
<dbReference type="InterPro" id="IPR045864">
    <property type="entry name" value="aa-tRNA-synth_II/BPL/LPL"/>
</dbReference>
<dbReference type="InterPro" id="IPR002317">
    <property type="entry name" value="Ser-tRNA-ligase_type_1"/>
</dbReference>
<dbReference type="InterPro" id="IPR015866">
    <property type="entry name" value="Ser-tRNA-synth_1_N"/>
</dbReference>
<dbReference type="InterPro" id="IPR042103">
    <property type="entry name" value="SerRS_1_N_sf"/>
</dbReference>
<dbReference type="InterPro" id="IPR033729">
    <property type="entry name" value="SerRS_core"/>
</dbReference>
<dbReference type="InterPro" id="IPR010978">
    <property type="entry name" value="tRNA-bd_arm"/>
</dbReference>
<dbReference type="NCBIfam" id="TIGR00414">
    <property type="entry name" value="serS"/>
    <property type="match status" value="1"/>
</dbReference>
<dbReference type="PANTHER" id="PTHR43697:SF1">
    <property type="entry name" value="SERINE--TRNA LIGASE"/>
    <property type="match status" value="1"/>
</dbReference>
<dbReference type="PANTHER" id="PTHR43697">
    <property type="entry name" value="SERYL-TRNA SYNTHETASE"/>
    <property type="match status" value="1"/>
</dbReference>
<dbReference type="Pfam" id="PF02403">
    <property type="entry name" value="Seryl_tRNA_N"/>
    <property type="match status" value="1"/>
</dbReference>
<dbReference type="Pfam" id="PF00587">
    <property type="entry name" value="tRNA-synt_2b"/>
    <property type="match status" value="1"/>
</dbReference>
<dbReference type="PIRSF" id="PIRSF001529">
    <property type="entry name" value="Ser-tRNA-synth_IIa"/>
    <property type="match status" value="1"/>
</dbReference>
<dbReference type="PRINTS" id="PR00981">
    <property type="entry name" value="TRNASYNTHSER"/>
</dbReference>
<dbReference type="SUPFAM" id="SSF55681">
    <property type="entry name" value="Class II aaRS and biotin synthetases"/>
    <property type="match status" value="1"/>
</dbReference>
<dbReference type="SUPFAM" id="SSF46589">
    <property type="entry name" value="tRNA-binding arm"/>
    <property type="match status" value="1"/>
</dbReference>
<dbReference type="PROSITE" id="PS50862">
    <property type="entry name" value="AA_TRNA_LIGASE_II"/>
    <property type="match status" value="1"/>
</dbReference>
<name>SYS_RHOP2</name>
<comment type="function">
    <text evidence="1">Catalyzes the attachment of serine to tRNA(Ser). Is also able to aminoacylate tRNA(Sec) with serine, to form the misacylated tRNA L-seryl-tRNA(Sec), which will be further converted into selenocysteinyl-tRNA(Sec).</text>
</comment>
<comment type="catalytic activity">
    <reaction evidence="1">
        <text>tRNA(Ser) + L-serine + ATP = L-seryl-tRNA(Ser) + AMP + diphosphate + H(+)</text>
        <dbReference type="Rhea" id="RHEA:12292"/>
        <dbReference type="Rhea" id="RHEA-COMP:9669"/>
        <dbReference type="Rhea" id="RHEA-COMP:9703"/>
        <dbReference type="ChEBI" id="CHEBI:15378"/>
        <dbReference type="ChEBI" id="CHEBI:30616"/>
        <dbReference type="ChEBI" id="CHEBI:33019"/>
        <dbReference type="ChEBI" id="CHEBI:33384"/>
        <dbReference type="ChEBI" id="CHEBI:78442"/>
        <dbReference type="ChEBI" id="CHEBI:78533"/>
        <dbReference type="ChEBI" id="CHEBI:456215"/>
        <dbReference type="EC" id="6.1.1.11"/>
    </reaction>
</comment>
<comment type="catalytic activity">
    <reaction evidence="1">
        <text>tRNA(Sec) + L-serine + ATP = L-seryl-tRNA(Sec) + AMP + diphosphate + H(+)</text>
        <dbReference type="Rhea" id="RHEA:42580"/>
        <dbReference type="Rhea" id="RHEA-COMP:9742"/>
        <dbReference type="Rhea" id="RHEA-COMP:10128"/>
        <dbReference type="ChEBI" id="CHEBI:15378"/>
        <dbReference type="ChEBI" id="CHEBI:30616"/>
        <dbReference type="ChEBI" id="CHEBI:33019"/>
        <dbReference type="ChEBI" id="CHEBI:33384"/>
        <dbReference type="ChEBI" id="CHEBI:78442"/>
        <dbReference type="ChEBI" id="CHEBI:78533"/>
        <dbReference type="ChEBI" id="CHEBI:456215"/>
        <dbReference type="EC" id="6.1.1.11"/>
    </reaction>
</comment>
<comment type="pathway">
    <text evidence="1">Aminoacyl-tRNA biosynthesis; selenocysteinyl-tRNA(Sec) biosynthesis; L-seryl-tRNA(Sec) from L-serine and tRNA(Sec): step 1/1.</text>
</comment>
<comment type="subunit">
    <text evidence="1">Homodimer. The tRNA molecule binds across the dimer.</text>
</comment>
<comment type="subcellular location">
    <subcellularLocation>
        <location evidence="1">Cytoplasm</location>
    </subcellularLocation>
</comment>
<comment type="domain">
    <text evidence="1">Consists of two distinct domains, a catalytic core and a N-terminal extension that is involved in tRNA binding.</text>
</comment>
<comment type="similarity">
    <text evidence="1">Belongs to the class-II aminoacyl-tRNA synthetase family. Type-1 seryl-tRNA synthetase subfamily.</text>
</comment>
<gene>
    <name evidence="1" type="primary">serS</name>
    <name type="ordered locus">RPB_2742</name>
</gene>
<protein>
    <recommendedName>
        <fullName evidence="1">Serine--tRNA ligase</fullName>
        <ecNumber evidence="1">6.1.1.11</ecNumber>
    </recommendedName>
    <alternativeName>
        <fullName evidence="1">Seryl-tRNA synthetase</fullName>
        <shortName evidence="1">SerRS</shortName>
    </alternativeName>
    <alternativeName>
        <fullName evidence="1">Seryl-tRNA(Ser/Sec) synthetase</fullName>
    </alternativeName>
</protein>
<sequence>MHDIKAIRDNPQAFDAAFTRRGLAPIADSLIKLDETRRAAILESEKAQARRNAASKEIGDAKKAKDNARADALMAEVAELKTTMPALEAAVKEADEALKKALSEIPNLPLDEVPEGADEHGNVDHHRFGAKRDYAFTPKAHYDLGEALGMMDFEAAAKISGARFVVLKKGLARLERAIGQFFLDVHTGEHGYTEVNPPLLVRDDAMFGTAQLPKFREDQFQTVTEEVRRRTIVEFVSSAMKLGASATDAGGSEFARQLANEELVDFSYAKMPERFWLIPTAEVSLTNLVRESILDEKELPMRLTALTPCFRAEAGAAGRDTRGMIRQHQFTKVELVSITTPEQSKDEHERMLSCAEEVLRRLGLHYRVMTLCTGDMGFASQKTYDIEVWMPGQGEGGAYREISSCSVCGDFQARRMDARSRGPDGKPRFVHTLNGSGTAVGRALIAVIENYQQEDGSIAVPDALQPYMGGLKVIAK</sequence>
<accession>Q2IWG6</accession>
<reference key="1">
    <citation type="submission" date="2006-01" db="EMBL/GenBank/DDBJ databases">
        <title>Complete sequence of Rhodopseudomonas palustris HaA2.</title>
        <authorList>
            <consortium name="US DOE Joint Genome Institute"/>
            <person name="Copeland A."/>
            <person name="Lucas S."/>
            <person name="Lapidus A."/>
            <person name="Barry K."/>
            <person name="Detter J.C."/>
            <person name="Glavina T."/>
            <person name="Hammon N."/>
            <person name="Israni S."/>
            <person name="Pitluck S."/>
            <person name="Chain P."/>
            <person name="Malfatti S."/>
            <person name="Shin M."/>
            <person name="Vergez L."/>
            <person name="Schmutz J."/>
            <person name="Larimer F."/>
            <person name="Land M."/>
            <person name="Hauser L."/>
            <person name="Pelletier D.A."/>
            <person name="Kyrpides N."/>
            <person name="Anderson I."/>
            <person name="Oda Y."/>
            <person name="Harwood C.S."/>
            <person name="Richardson P."/>
        </authorList>
    </citation>
    <scope>NUCLEOTIDE SEQUENCE [LARGE SCALE GENOMIC DNA]</scope>
    <source>
        <strain>HaA2</strain>
    </source>
</reference>
<organism>
    <name type="scientific">Rhodopseudomonas palustris (strain HaA2)</name>
    <dbReference type="NCBI Taxonomy" id="316058"/>
    <lineage>
        <taxon>Bacteria</taxon>
        <taxon>Pseudomonadati</taxon>
        <taxon>Pseudomonadota</taxon>
        <taxon>Alphaproteobacteria</taxon>
        <taxon>Hyphomicrobiales</taxon>
        <taxon>Nitrobacteraceae</taxon>
        <taxon>Rhodopseudomonas</taxon>
    </lineage>
</organism>
<proteinExistence type="inferred from homology"/>
<evidence type="ECO:0000255" key="1">
    <source>
        <dbReference type="HAMAP-Rule" id="MF_00176"/>
    </source>
</evidence>
<feature type="chain" id="PRO_1000019792" description="Serine--tRNA ligase">
    <location>
        <begin position="1"/>
        <end position="476"/>
    </location>
</feature>
<feature type="binding site" evidence="1">
    <location>
        <begin position="280"/>
        <end position="282"/>
    </location>
    <ligand>
        <name>L-serine</name>
        <dbReference type="ChEBI" id="CHEBI:33384"/>
    </ligand>
</feature>
<feature type="binding site" evidence="1">
    <location>
        <begin position="311"/>
        <end position="313"/>
    </location>
    <ligand>
        <name>ATP</name>
        <dbReference type="ChEBI" id="CHEBI:30616"/>
    </ligand>
</feature>
<feature type="binding site" evidence="1">
    <location>
        <position position="334"/>
    </location>
    <ligand>
        <name>L-serine</name>
        <dbReference type="ChEBI" id="CHEBI:33384"/>
    </ligand>
</feature>
<feature type="binding site" evidence="1">
    <location>
        <begin position="401"/>
        <end position="404"/>
    </location>
    <ligand>
        <name>ATP</name>
        <dbReference type="ChEBI" id="CHEBI:30616"/>
    </ligand>
</feature>
<feature type="binding site" evidence="1">
    <location>
        <position position="436"/>
    </location>
    <ligand>
        <name>L-serine</name>
        <dbReference type="ChEBI" id="CHEBI:33384"/>
    </ligand>
</feature>
<keyword id="KW-0030">Aminoacyl-tRNA synthetase</keyword>
<keyword id="KW-0067">ATP-binding</keyword>
<keyword id="KW-0963">Cytoplasm</keyword>
<keyword id="KW-0436">Ligase</keyword>
<keyword id="KW-0547">Nucleotide-binding</keyword>
<keyword id="KW-0648">Protein biosynthesis</keyword>
<keyword id="KW-1185">Reference proteome</keyword>